<comment type="function">
    <text evidence="1">Involved in the biosynthesis of isopentenyl diphosphate (IPP) and dimethylallyl diphosphate (DMAPP), two major building blocks of isoprenoid compounds. Catalyzes the conversion of 4-diphosphocytidyl-2-C-methyl-D-erythritol 2-phosphate (CDP-ME2P) to 2-C-methyl-D-erythritol 2,4-cyclodiphosphate (ME-CPP) with a corresponding release of cytidine 5-monophosphate (CMP).</text>
</comment>
<comment type="catalytic activity">
    <reaction evidence="1">
        <text>4-CDP-2-C-methyl-D-erythritol 2-phosphate = 2-C-methyl-D-erythritol 2,4-cyclic diphosphate + CMP</text>
        <dbReference type="Rhea" id="RHEA:23864"/>
        <dbReference type="ChEBI" id="CHEBI:57919"/>
        <dbReference type="ChEBI" id="CHEBI:58483"/>
        <dbReference type="ChEBI" id="CHEBI:60377"/>
        <dbReference type="EC" id="4.6.1.12"/>
    </reaction>
</comment>
<comment type="cofactor">
    <cofactor evidence="1">
        <name>a divalent metal cation</name>
        <dbReference type="ChEBI" id="CHEBI:60240"/>
    </cofactor>
    <text evidence="1">Binds 1 divalent metal cation per subunit.</text>
</comment>
<comment type="pathway">
    <text evidence="1">Isoprenoid biosynthesis; isopentenyl diphosphate biosynthesis via DXP pathway; isopentenyl diphosphate from 1-deoxy-D-xylulose 5-phosphate: step 4/6.</text>
</comment>
<comment type="subunit">
    <text evidence="1">Homotrimer.</text>
</comment>
<comment type="similarity">
    <text evidence="1">Belongs to the IspF family.</text>
</comment>
<reference key="1">
    <citation type="journal article" date="2007" name="Genome Biol.">
        <title>Comparison of Francisella tularensis genomes reveals evolutionary events associated with the emergence of human pathogenic strains.</title>
        <authorList>
            <person name="Rohmer L."/>
            <person name="Fong C."/>
            <person name="Abmayr S."/>
            <person name="Wasnick M."/>
            <person name="Larson Freeman T.J."/>
            <person name="Radey M."/>
            <person name="Guina T."/>
            <person name="Svensson K."/>
            <person name="Hayden H.S."/>
            <person name="Jacobs M."/>
            <person name="Gallagher L.A."/>
            <person name="Manoil C."/>
            <person name="Ernst R.K."/>
            <person name="Drees B."/>
            <person name="Buckley D."/>
            <person name="Haugen E."/>
            <person name="Bovee D."/>
            <person name="Zhou Y."/>
            <person name="Chang J."/>
            <person name="Levy R."/>
            <person name="Lim R."/>
            <person name="Gillett W."/>
            <person name="Guenthener D."/>
            <person name="Kang A."/>
            <person name="Shaffer S.A."/>
            <person name="Taylor G."/>
            <person name="Chen J."/>
            <person name="Gallis B."/>
            <person name="D'Argenio D.A."/>
            <person name="Forsman M."/>
            <person name="Olson M.V."/>
            <person name="Goodlett D.R."/>
            <person name="Kaul R."/>
            <person name="Miller S.I."/>
            <person name="Brittnacher M.J."/>
        </authorList>
    </citation>
    <scope>NUCLEOTIDE SEQUENCE [LARGE SCALE GENOMIC DNA]</scope>
    <source>
        <strain>U112</strain>
    </source>
</reference>
<keyword id="KW-0414">Isoprene biosynthesis</keyword>
<keyword id="KW-0456">Lyase</keyword>
<keyword id="KW-0479">Metal-binding</keyword>
<gene>
    <name evidence="1" type="primary">ispF</name>
    <name type="ordered locus">FTN_1110</name>
</gene>
<proteinExistence type="inferred from homology"/>
<sequence length="159" mass="17677">MSFRIGHGYDVHKFTSAKQNIIIGGVEIAYHLGLEAHSDGDVLIHALCDAILGALGLGDIGKHFPDTDNQFKNIDSKFFLAEIKKMLDEKQYSINNIDCTIIAQAPKMLPHIEKMRACLANILEIQISQINIKATTTERLGFIGREEGIATHVVCLLYR</sequence>
<evidence type="ECO:0000255" key="1">
    <source>
        <dbReference type="HAMAP-Rule" id="MF_00107"/>
    </source>
</evidence>
<dbReference type="EC" id="4.6.1.12" evidence="1"/>
<dbReference type="EMBL" id="CP000439">
    <property type="protein sequence ID" value="ABK89996.1"/>
    <property type="molecule type" value="Genomic_DNA"/>
</dbReference>
<dbReference type="RefSeq" id="WP_003034218.1">
    <property type="nucleotide sequence ID" value="NZ_CP009633.1"/>
</dbReference>
<dbReference type="SMR" id="A0Q6Y1"/>
<dbReference type="GeneID" id="75265154"/>
<dbReference type="KEGG" id="ftn:FTN_1110"/>
<dbReference type="KEGG" id="ftx:AW25_898"/>
<dbReference type="BioCyc" id="FTUL401614:G1G75-1152-MONOMER"/>
<dbReference type="UniPathway" id="UPA00056">
    <property type="reaction ID" value="UER00095"/>
</dbReference>
<dbReference type="Proteomes" id="UP000000762">
    <property type="component" value="Chromosome"/>
</dbReference>
<dbReference type="GO" id="GO:0008685">
    <property type="term" value="F:2-C-methyl-D-erythritol 2,4-cyclodiphosphate synthase activity"/>
    <property type="evidence" value="ECO:0007669"/>
    <property type="project" value="UniProtKB-UniRule"/>
</dbReference>
<dbReference type="GO" id="GO:0046872">
    <property type="term" value="F:metal ion binding"/>
    <property type="evidence" value="ECO:0007669"/>
    <property type="project" value="UniProtKB-KW"/>
</dbReference>
<dbReference type="GO" id="GO:0019288">
    <property type="term" value="P:isopentenyl diphosphate biosynthetic process, methylerythritol 4-phosphate pathway"/>
    <property type="evidence" value="ECO:0007669"/>
    <property type="project" value="UniProtKB-UniRule"/>
</dbReference>
<dbReference type="GO" id="GO:0016114">
    <property type="term" value="P:terpenoid biosynthetic process"/>
    <property type="evidence" value="ECO:0007669"/>
    <property type="project" value="InterPro"/>
</dbReference>
<dbReference type="CDD" id="cd00554">
    <property type="entry name" value="MECDP_synthase"/>
    <property type="match status" value="1"/>
</dbReference>
<dbReference type="FunFam" id="3.30.1330.50:FF:000001">
    <property type="entry name" value="2-C-methyl-D-erythritol 2,4-cyclodiphosphate synthase"/>
    <property type="match status" value="1"/>
</dbReference>
<dbReference type="Gene3D" id="3.30.1330.50">
    <property type="entry name" value="2-C-methyl-D-erythritol 2,4-cyclodiphosphate synthase"/>
    <property type="match status" value="1"/>
</dbReference>
<dbReference type="HAMAP" id="MF_00107">
    <property type="entry name" value="IspF"/>
    <property type="match status" value="1"/>
</dbReference>
<dbReference type="InterPro" id="IPR003526">
    <property type="entry name" value="MECDP_synthase"/>
</dbReference>
<dbReference type="InterPro" id="IPR020555">
    <property type="entry name" value="MECDP_synthase_CS"/>
</dbReference>
<dbReference type="InterPro" id="IPR036571">
    <property type="entry name" value="MECDP_synthase_sf"/>
</dbReference>
<dbReference type="NCBIfam" id="TIGR00151">
    <property type="entry name" value="ispF"/>
    <property type="match status" value="1"/>
</dbReference>
<dbReference type="PANTHER" id="PTHR43181">
    <property type="entry name" value="2-C-METHYL-D-ERYTHRITOL 2,4-CYCLODIPHOSPHATE SYNTHASE, CHLOROPLASTIC"/>
    <property type="match status" value="1"/>
</dbReference>
<dbReference type="PANTHER" id="PTHR43181:SF1">
    <property type="entry name" value="2-C-METHYL-D-ERYTHRITOL 2,4-CYCLODIPHOSPHATE SYNTHASE, CHLOROPLASTIC"/>
    <property type="match status" value="1"/>
</dbReference>
<dbReference type="Pfam" id="PF02542">
    <property type="entry name" value="YgbB"/>
    <property type="match status" value="1"/>
</dbReference>
<dbReference type="SUPFAM" id="SSF69765">
    <property type="entry name" value="IpsF-like"/>
    <property type="match status" value="1"/>
</dbReference>
<dbReference type="PROSITE" id="PS01350">
    <property type="entry name" value="ISPF"/>
    <property type="match status" value="1"/>
</dbReference>
<protein>
    <recommendedName>
        <fullName evidence="1">2-C-methyl-D-erythritol 2,4-cyclodiphosphate synthase</fullName>
        <shortName evidence="1">MECDP-synthase</shortName>
        <shortName evidence="1">MECPP-synthase</shortName>
        <shortName evidence="1">MECPS</shortName>
        <ecNumber evidence="1">4.6.1.12</ecNumber>
    </recommendedName>
</protein>
<accession>A0Q6Y1</accession>
<feature type="chain" id="PRO_1000022839" description="2-C-methyl-D-erythritol 2,4-cyclodiphosphate synthase">
    <location>
        <begin position="1"/>
        <end position="159"/>
    </location>
</feature>
<feature type="binding site" evidence="1">
    <location>
        <begin position="10"/>
        <end position="12"/>
    </location>
    <ligand>
        <name>4-CDP-2-C-methyl-D-erythritol 2-phosphate</name>
        <dbReference type="ChEBI" id="CHEBI:57919"/>
    </ligand>
</feature>
<feature type="binding site" evidence="1">
    <location>
        <position position="10"/>
    </location>
    <ligand>
        <name>a divalent metal cation</name>
        <dbReference type="ChEBI" id="CHEBI:60240"/>
    </ligand>
</feature>
<feature type="binding site" evidence="1">
    <location>
        <position position="12"/>
    </location>
    <ligand>
        <name>a divalent metal cation</name>
        <dbReference type="ChEBI" id="CHEBI:60240"/>
    </ligand>
</feature>
<feature type="binding site" evidence="1">
    <location>
        <begin position="37"/>
        <end position="38"/>
    </location>
    <ligand>
        <name>4-CDP-2-C-methyl-D-erythritol 2-phosphate</name>
        <dbReference type="ChEBI" id="CHEBI:57919"/>
    </ligand>
</feature>
<feature type="binding site" evidence="1">
    <location>
        <position position="45"/>
    </location>
    <ligand>
        <name>a divalent metal cation</name>
        <dbReference type="ChEBI" id="CHEBI:60240"/>
    </ligand>
</feature>
<feature type="binding site" evidence="1">
    <location>
        <begin position="59"/>
        <end position="61"/>
    </location>
    <ligand>
        <name>4-CDP-2-C-methyl-D-erythritol 2-phosphate</name>
        <dbReference type="ChEBI" id="CHEBI:57919"/>
    </ligand>
</feature>
<feature type="binding site" evidence="1">
    <location>
        <begin position="64"/>
        <end position="68"/>
    </location>
    <ligand>
        <name>4-CDP-2-C-methyl-D-erythritol 2-phosphate</name>
        <dbReference type="ChEBI" id="CHEBI:57919"/>
    </ligand>
</feature>
<feature type="binding site" evidence="1">
    <location>
        <begin position="103"/>
        <end position="109"/>
    </location>
    <ligand>
        <name>4-CDP-2-C-methyl-D-erythritol 2-phosphate</name>
        <dbReference type="ChEBI" id="CHEBI:57919"/>
    </ligand>
</feature>
<feature type="binding site" evidence="1">
    <location>
        <begin position="135"/>
        <end position="138"/>
    </location>
    <ligand>
        <name>4-CDP-2-C-methyl-D-erythritol 2-phosphate</name>
        <dbReference type="ChEBI" id="CHEBI:57919"/>
    </ligand>
</feature>
<feature type="binding site" evidence="1">
    <location>
        <position position="142"/>
    </location>
    <ligand>
        <name>4-CDP-2-C-methyl-D-erythritol 2-phosphate</name>
        <dbReference type="ChEBI" id="CHEBI:57919"/>
    </ligand>
</feature>
<feature type="binding site" evidence="1">
    <location>
        <position position="145"/>
    </location>
    <ligand>
        <name>4-CDP-2-C-methyl-D-erythritol 2-phosphate</name>
        <dbReference type="ChEBI" id="CHEBI:57919"/>
    </ligand>
</feature>
<feature type="site" description="Transition state stabilizer" evidence="1">
    <location>
        <position position="37"/>
    </location>
</feature>
<feature type="site" description="Transition state stabilizer" evidence="1">
    <location>
        <position position="136"/>
    </location>
</feature>
<name>ISPF_FRATN</name>
<organism>
    <name type="scientific">Francisella tularensis subsp. novicida (strain U112)</name>
    <dbReference type="NCBI Taxonomy" id="401614"/>
    <lineage>
        <taxon>Bacteria</taxon>
        <taxon>Pseudomonadati</taxon>
        <taxon>Pseudomonadota</taxon>
        <taxon>Gammaproteobacteria</taxon>
        <taxon>Thiotrichales</taxon>
        <taxon>Francisellaceae</taxon>
        <taxon>Francisella</taxon>
    </lineage>
</organism>